<comment type="function">
    <text evidence="1">Catalyzes the GTP-dependent ribosomal translocation step during translation elongation. During this step, the ribosome changes from the pre-translocational (PRE) to the post-translocational (POST) state as the newly formed A-site-bound peptidyl-tRNA and P-site-bound deacylated tRNA move to the P and E sites, respectively. Catalyzes the coordinated movement of the two tRNA molecules, the mRNA and conformational changes in the ribosome.</text>
</comment>
<comment type="subcellular location">
    <subcellularLocation>
        <location evidence="1">Cytoplasm</location>
    </subcellularLocation>
</comment>
<comment type="similarity">
    <text evidence="1">Belongs to the TRAFAC class translation factor GTPase superfamily. Classic translation factor GTPase family. EF-G/EF-2 subfamily.</text>
</comment>
<feature type="chain" id="PRO_1000008809" description="Elongation factor G">
    <location>
        <begin position="1"/>
        <end position="691"/>
    </location>
</feature>
<feature type="domain" description="tr-type G">
    <location>
        <begin position="8"/>
        <end position="282"/>
    </location>
</feature>
<feature type="binding site" evidence="1">
    <location>
        <begin position="17"/>
        <end position="24"/>
    </location>
    <ligand>
        <name>GTP</name>
        <dbReference type="ChEBI" id="CHEBI:37565"/>
    </ligand>
</feature>
<feature type="binding site" evidence="1">
    <location>
        <begin position="81"/>
        <end position="85"/>
    </location>
    <ligand>
        <name>GTP</name>
        <dbReference type="ChEBI" id="CHEBI:37565"/>
    </ligand>
</feature>
<feature type="binding site" evidence="1">
    <location>
        <begin position="135"/>
        <end position="138"/>
    </location>
    <ligand>
        <name>GTP</name>
        <dbReference type="ChEBI" id="CHEBI:37565"/>
    </ligand>
</feature>
<proteinExistence type="inferred from homology"/>
<protein>
    <recommendedName>
        <fullName evidence="1">Elongation factor G</fullName>
        <shortName evidence="1">EF-G</shortName>
    </recommendedName>
</protein>
<evidence type="ECO:0000255" key="1">
    <source>
        <dbReference type="HAMAP-Rule" id="MF_00054"/>
    </source>
</evidence>
<reference key="1">
    <citation type="submission" date="2007-04" db="EMBL/GenBank/DDBJ databases">
        <title>Genome sequence of the thermophilic hydrogen-producing bacterium Caldicellulosiruptor saccharolyticus DSM 8903.</title>
        <authorList>
            <person name="Copeland A."/>
            <person name="Lucas S."/>
            <person name="Lapidus A."/>
            <person name="Barry K."/>
            <person name="Detter J.C."/>
            <person name="Glavina del Rio T."/>
            <person name="Hammon N."/>
            <person name="Israni S."/>
            <person name="Dalin E."/>
            <person name="Tice H."/>
            <person name="Pitluck S."/>
            <person name="Kiss H."/>
            <person name="Brettin T."/>
            <person name="Bruce D."/>
            <person name="Han C."/>
            <person name="Schmutz J."/>
            <person name="Larimer F."/>
            <person name="Land M."/>
            <person name="Hauser L."/>
            <person name="Kyrpides N."/>
            <person name="Lykidis A."/>
            <person name="van de Werken H.J.G."/>
            <person name="Verhaart M.R.A."/>
            <person name="VanFossen A.L."/>
            <person name="Lewis D.L."/>
            <person name="Nichols J.D."/>
            <person name="Goorissen H.P."/>
            <person name="van Niel E.W.J."/>
            <person name="Stams F.J.M."/>
            <person name="Willquist K.U."/>
            <person name="Ward D.E."/>
            <person name="van der Oost J."/>
            <person name="Kelly R.M."/>
            <person name="Kengen S.M.W."/>
            <person name="Richardson P."/>
        </authorList>
    </citation>
    <scope>NUCLEOTIDE SEQUENCE [LARGE SCALE GENOMIC DNA]</scope>
    <source>
        <strain>ATCC 43494 / DSM 8903 / Tp8T 6331</strain>
    </source>
</reference>
<organism>
    <name type="scientific">Caldicellulosiruptor saccharolyticus (strain ATCC 43494 / DSM 8903 / Tp8T 6331)</name>
    <dbReference type="NCBI Taxonomy" id="351627"/>
    <lineage>
        <taxon>Bacteria</taxon>
        <taxon>Bacillati</taxon>
        <taxon>Bacillota</taxon>
        <taxon>Bacillota incertae sedis</taxon>
        <taxon>Caldicellulosiruptorales</taxon>
        <taxon>Caldicellulosiruptoraceae</taxon>
        <taxon>Caldicellulosiruptor</taxon>
    </lineage>
</organism>
<gene>
    <name evidence="1" type="primary">fusA</name>
    <name type="ordered locus">Csac_0957</name>
</gene>
<sequence length="691" mass="77245">MPRQFPLEKTRNIGIMAHIDAGKTTTTERILFYTGKVYKMGEVHEGTATMDWMEQEQERGITITSAATTCEWRGHRINIIDTPGHVDFTVEVERSLRVLDGAIAVFCAKGGVEPQSETVWRQADKYRVPRIAYVNKMDIMGANFFNVIEMMKERLGANPVAIQVPIGKEDTFKGVVDLLTMKAIIYVDDLGKVSQETEIPDEVKDIAEEYRIKLLEAVAETDEEIMMKYLEGEEITVEELKAAIRKATINMQMTPVLCGSSYRNKGVQPLLDAVVDYLPSPVDIAAVKGFSPDTGEEIERKTSEDEPFCALAFKIMSDPYVGKLTFLRVYSGVLQAGSYVYNSTKNKKERVGRLLQMHANHREDIDAVYAGDICAAIGLSNTTTGDTLCDENHPIILESMEFPEPVIQVAIEPKTKADQEKMGIALQRLAEEDPTFKISTNHETGQTLIAGMGELHLEIIVDRMKREFKVEVNVGKPQVAYKETIKKSVKVEGKYIRQSGGRGQYGHVWLELEPLERGGGYEFVNKIVGGVIPKEFIPSVDAGVQEAMQSGVLAGYPVVDVRVTLFDGSYHEVDSSDMAFRIAAAQAFREGMKKAEPVLLEPIMKVEVVVPEEYMGDVMGDINARRGRIEGMELRGNAQVIRAYVPLAEMFGYATDLRSKTQGRGTYTMQFDHYEEVPKNIADKILEMKNK</sequence>
<name>EFG_CALS8</name>
<keyword id="KW-0963">Cytoplasm</keyword>
<keyword id="KW-0251">Elongation factor</keyword>
<keyword id="KW-0342">GTP-binding</keyword>
<keyword id="KW-0547">Nucleotide-binding</keyword>
<keyword id="KW-0648">Protein biosynthesis</keyword>
<dbReference type="EMBL" id="CP000679">
    <property type="protein sequence ID" value="ABP66571.1"/>
    <property type="molecule type" value="Genomic_DNA"/>
</dbReference>
<dbReference type="RefSeq" id="WP_011916517.1">
    <property type="nucleotide sequence ID" value="NC_009437.1"/>
</dbReference>
<dbReference type="SMR" id="A4XI36"/>
<dbReference type="STRING" id="351627.Csac_0957"/>
<dbReference type="KEGG" id="csc:Csac_0957"/>
<dbReference type="eggNOG" id="COG0480">
    <property type="taxonomic scope" value="Bacteria"/>
</dbReference>
<dbReference type="HOGENOM" id="CLU_002794_4_1_9"/>
<dbReference type="OrthoDB" id="9804431at2"/>
<dbReference type="Proteomes" id="UP000000256">
    <property type="component" value="Chromosome"/>
</dbReference>
<dbReference type="GO" id="GO:0005737">
    <property type="term" value="C:cytoplasm"/>
    <property type="evidence" value="ECO:0007669"/>
    <property type="project" value="UniProtKB-SubCell"/>
</dbReference>
<dbReference type="GO" id="GO:0005525">
    <property type="term" value="F:GTP binding"/>
    <property type="evidence" value="ECO:0007669"/>
    <property type="project" value="UniProtKB-UniRule"/>
</dbReference>
<dbReference type="GO" id="GO:0003924">
    <property type="term" value="F:GTPase activity"/>
    <property type="evidence" value="ECO:0007669"/>
    <property type="project" value="InterPro"/>
</dbReference>
<dbReference type="GO" id="GO:0003746">
    <property type="term" value="F:translation elongation factor activity"/>
    <property type="evidence" value="ECO:0007669"/>
    <property type="project" value="UniProtKB-UniRule"/>
</dbReference>
<dbReference type="GO" id="GO:0032790">
    <property type="term" value="P:ribosome disassembly"/>
    <property type="evidence" value="ECO:0007669"/>
    <property type="project" value="TreeGrafter"/>
</dbReference>
<dbReference type="CDD" id="cd01886">
    <property type="entry name" value="EF-G"/>
    <property type="match status" value="1"/>
</dbReference>
<dbReference type="CDD" id="cd16262">
    <property type="entry name" value="EFG_III"/>
    <property type="match status" value="1"/>
</dbReference>
<dbReference type="CDD" id="cd01434">
    <property type="entry name" value="EFG_mtEFG1_IV"/>
    <property type="match status" value="1"/>
</dbReference>
<dbReference type="CDD" id="cd03713">
    <property type="entry name" value="EFG_mtEFG_C"/>
    <property type="match status" value="1"/>
</dbReference>
<dbReference type="CDD" id="cd04088">
    <property type="entry name" value="EFG_mtEFG_II"/>
    <property type="match status" value="1"/>
</dbReference>
<dbReference type="FunFam" id="2.40.30.10:FF:000006">
    <property type="entry name" value="Elongation factor G"/>
    <property type="match status" value="1"/>
</dbReference>
<dbReference type="FunFam" id="3.30.230.10:FF:000003">
    <property type="entry name" value="Elongation factor G"/>
    <property type="match status" value="1"/>
</dbReference>
<dbReference type="FunFam" id="3.30.70.240:FF:000001">
    <property type="entry name" value="Elongation factor G"/>
    <property type="match status" value="1"/>
</dbReference>
<dbReference type="FunFam" id="3.30.70.870:FF:000001">
    <property type="entry name" value="Elongation factor G"/>
    <property type="match status" value="1"/>
</dbReference>
<dbReference type="FunFam" id="3.40.50.300:FF:000029">
    <property type="entry name" value="Elongation factor G"/>
    <property type="match status" value="1"/>
</dbReference>
<dbReference type="Gene3D" id="3.30.230.10">
    <property type="match status" value="1"/>
</dbReference>
<dbReference type="Gene3D" id="3.30.70.240">
    <property type="match status" value="1"/>
</dbReference>
<dbReference type="Gene3D" id="3.30.70.870">
    <property type="entry name" value="Elongation Factor G (Translational Gtpase), domain 3"/>
    <property type="match status" value="1"/>
</dbReference>
<dbReference type="Gene3D" id="3.40.50.300">
    <property type="entry name" value="P-loop containing nucleotide triphosphate hydrolases"/>
    <property type="match status" value="1"/>
</dbReference>
<dbReference type="Gene3D" id="2.40.30.10">
    <property type="entry name" value="Translation factors"/>
    <property type="match status" value="1"/>
</dbReference>
<dbReference type="HAMAP" id="MF_00054_B">
    <property type="entry name" value="EF_G_EF_2_B"/>
    <property type="match status" value="1"/>
</dbReference>
<dbReference type="InterPro" id="IPR041095">
    <property type="entry name" value="EFG_II"/>
</dbReference>
<dbReference type="InterPro" id="IPR009022">
    <property type="entry name" value="EFG_III"/>
</dbReference>
<dbReference type="InterPro" id="IPR035647">
    <property type="entry name" value="EFG_III/V"/>
</dbReference>
<dbReference type="InterPro" id="IPR047872">
    <property type="entry name" value="EFG_IV"/>
</dbReference>
<dbReference type="InterPro" id="IPR035649">
    <property type="entry name" value="EFG_V"/>
</dbReference>
<dbReference type="InterPro" id="IPR000640">
    <property type="entry name" value="EFG_V-like"/>
</dbReference>
<dbReference type="InterPro" id="IPR004161">
    <property type="entry name" value="EFTu-like_2"/>
</dbReference>
<dbReference type="InterPro" id="IPR031157">
    <property type="entry name" value="G_TR_CS"/>
</dbReference>
<dbReference type="InterPro" id="IPR027417">
    <property type="entry name" value="P-loop_NTPase"/>
</dbReference>
<dbReference type="InterPro" id="IPR020568">
    <property type="entry name" value="Ribosomal_Su5_D2-typ_SF"/>
</dbReference>
<dbReference type="InterPro" id="IPR014721">
    <property type="entry name" value="Ribsml_uS5_D2-typ_fold_subgr"/>
</dbReference>
<dbReference type="InterPro" id="IPR005225">
    <property type="entry name" value="Small_GTP-bd"/>
</dbReference>
<dbReference type="InterPro" id="IPR000795">
    <property type="entry name" value="T_Tr_GTP-bd_dom"/>
</dbReference>
<dbReference type="InterPro" id="IPR009000">
    <property type="entry name" value="Transl_B-barrel_sf"/>
</dbReference>
<dbReference type="InterPro" id="IPR004540">
    <property type="entry name" value="Transl_elong_EFG/EF2"/>
</dbReference>
<dbReference type="InterPro" id="IPR005517">
    <property type="entry name" value="Transl_elong_EFG/EF2_IV"/>
</dbReference>
<dbReference type="NCBIfam" id="TIGR00484">
    <property type="entry name" value="EF-G"/>
    <property type="match status" value="1"/>
</dbReference>
<dbReference type="NCBIfam" id="NF009379">
    <property type="entry name" value="PRK12740.1-3"/>
    <property type="match status" value="1"/>
</dbReference>
<dbReference type="NCBIfam" id="NF009381">
    <property type="entry name" value="PRK12740.1-5"/>
    <property type="match status" value="1"/>
</dbReference>
<dbReference type="NCBIfam" id="NF009891">
    <property type="entry name" value="PRK13351.1-1"/>
    <property type="match status" value="1"/>
</dbReference>
<dbReference type="NCBIfam" id="TIGR00231">
    <property type="entry name" value="small_GTP"/>
    <property type="match status" value="1"/>
</dbReference>
<dbReference type="PANTHER" id="PTHR43261:SF1">
    <property type="entry name" value="RIBOSOME-RELEASING FACTOR 2, MITOCHONDRIAL"/>
    <property type="match status" value="1"/>
</dbReference>
<dbReference type="PANTHER" id="PTHR43261">
    <property type="entry name" value="TRANSLATION ELONGATION FACTOR G-RELATED"/>
    <property type="match status" value="1"/>
</dbReference>
<dbReference type="Pfam" id="PF00679">
    <property type="entry name" value="EFG_C"/>
    <property type="match status" value="1"/>
</dbReference>
<dbReference type="Pfam" id="PF14492">
    <property type="entry name" value="EFG_III"/>
    <property type="match status" value="1"/>
</dbReference>
<dbReference type="Pfam" id="PF03764">
    <property type="entry name" value="EFG_IV"/>
    <property type="match status" value="1"/>
</dbReference>
<dbReference type="Pfam" id="PF00009">
    <property type="entry name" value="GTP_EFTU"/>
    <property type="match status" value="1"/>
</dbReference>
<dbReference type="Pfam" id="PF03144">
    <property type="entry name" value="GTP_EFTU_D2"/>
    <property type="match status" value="1"/>
</dbReference>
<dbReference type="PRINTS" id="PR00315">
    <property type="entry name" value="ELONGATNFCT"/>
</dbReference>
<dbReference type="SMART" id="SM00838">
    <property type="entry name" value="EFG_C"/>
    <property type="match status" value="1"/>
</dbReference>
<dbReference type="SMART" id="SM00889">
    <property type="entry name" value="EFG_IV"/>
    <property type="match status" value="1"/>
</dbReference>
<dbReference type="SUPFAM" id="SSF54980">
    <property type="entry name" value="EF-G C-terminal domain-like"/>
    <property type="match status" value="2"/>
</dbReference>
<dbReference type="SUPFAM" id="SSF52540">
    <property type="entry name" value="P-loop containing nucleoside triphosphate hydrolases"/>
    <property type="match status" value="1"/>
</dbReference>
<dbReference type="SUPFAM" id="SSF54211">
    <property type="entry name" value="Ribosomal protein S5 domain 2-like"/>
    <property type="match status" value="1"/>
</dbReference>
<dbReference type="SUPFAM" id="SSF50447">
    <property type="entry name" value="Translation proteins"/>
    <property type="match status" value="1"/>
</dbReference>
<dbReference type="PROSITE" id="PS00301">
    <property type="entry name" value="G_TR_1"/>
    <property type="match status" value="1"/>
</dbReference>
<dbReference type="PROSITE" id="PS51722">
    <property type="entry name" value="G_TR_2"/>
    <property type="match status" value="1"/>
</dbReference>
<accession>A4XI36</accession>